<feature type="chain" id="PRO_0000130875" description="Small ribosomal subunit protein uS14">
    <location>
        <begin position="1"/>
        <end position="101"/>
    </location>
</feature>
<proteinExistence type="inferred from homology"/>
<accession>P66399</accession>
<accession>Q8YHM7</accession>
<gene>
    <name evidence="1" type="primary">rpsN</name>
    <name type="ordered locus">BMEI0770</name>
</gene>
<sequence>MAKTSAVEKNKRREKLVKRHAVKRARLKAIVMDQGLPLEERFRATIRLAELPRNSAKVRIRNRCEVSGRPRGYYRKLKMSRIALRQLGSLGQIPGVVKSSW</sequence>
<comment type="function">
    <text evidence="1">Binds 16S rRNA, required for the assembly of 30S particles and may also be responsible for determining the conformation of the 16S rRNA at the A site.</text>
</comment>
<comment type="subunit">
    <text evidence="1">Part of the 30S ribosomal subunit. Contacts proteins S3 and S10.</text>
</comment>
<comment type="similarity">
    <text evidence="1">Belongs to the universal ribosomal protein uS14 family.</text>
</comment>
<reference key="1">
    <citation type="journal article" date="2002" name="Proc. Natl. Acad. Sci. U.S.A.">
        <title>The genome sequence of the facultative intracellular pathogen Brucella melitensis.</title>
        <authorList>
            <person name="DelVecchio V.G."/>
            <person name="Kapatral V."/>
            <person name="Redkar R.J."/>
            <person name="Patra G."/>
            <person name="Mujer C."/>
            <person name="Los T."/>
            <person name="Ivanova N."/>
            <person name="Anderson I."/>
            <person name="Bhattacharyya A."/>
            <person name="Lykidis A."/>
            <person name="Reznik G."/>
            <person name="Jablonski L."/>
            <person name="Larsen N."/>
            <person name="D'Souza M."/>
            <person name="Bernal A."/>
            <person name="Mazur M."/>
            <person name="Goltsman E."/>
            <person name="Selkov E."/>
            <person name="Elzer P.H."/>
            <person name="Hagius S."/>
            <person name="O'Callaghan D."/>
            <person name="Letesson J.-J."/>
            <person name="Haselkorn R."/>
            <person name="Kyrpides N.C."/>
            <person name="Overbeek R."/>
        </authorList>
    </citation>
    <scope>NUCLEOTIDE SEQUENCE [LARGE SCALE GENOMIC DNA]</scope>
    <source>
        <strain>ATCC 23456 / CCUG 17765 / NCTC 10094 / 16M</strain>
    </source>
</reference>
<name>RS14_BRUME</name>
<protein>
    <recommendedName>
        <fullName evidence="1">Small ribosomal subunit protein uS14</fullName>
    </recommendedName>
    <alternativeName>
        <fullName evidence="2">30S ribosomal protein S14</fullName>
    </alternativeName>
</protein>
<keyword id="KW-0687">Ribonucleoprotein</keyword>
<keyword id="KW-0689">Ribosomal protein</keyword>
<keyword id="KW-0694">RNA-binding</keyword>
<keyword id="KW-0699">rRNA-binding</keyword>
<dbReference type="EMBL" id="AE008917">
    <property type="protein sequence ID" value="AAL51951.1"/>
    <property type="molecule type" value="Genomic_DNA"/>
</dbReference>
<dbReference type="PIR" id="AD3348">
    <property type="entry name" value="AD3348"/>
</dbReference>
<dbReference type="RefSeq" id="WP_002964349.1">
    <property type="nucleotide sequence ID" value="NZ_GG703780.1"/>
</dbReference>
<dbReference type="SMR" id="P66399"/>
<dbReference type="GeneID" id="97533537"/>
<dbReference type="KEGG" id="bme:BMEI0770"/>
<dbReference type="KEGG" id="bmel:DK63_652"/>
<dbReference type="PATRIC" id="fig|224914.52.peg.683"/>
<dbReference type="eggNOG" id="COG0199">
    <property type="taxonomic scope" value="Bacteria"/>
</dbReference>
<dbReference type="Proteomes" id="UP000000419">
    <property type="component" value="Chromosome I"/>
</dbReference>
<dbReference type="GO" id="GO:0005737">
    <property type="term" value="C:cytoplasm"/>
    <property type="evidence" value="ECO:0007669"/>
    <property type="project" value="UniProtKB-ARBA"/>
</dbReference>
<dbReference type="GO" id="GO:0015935">
    <property type="term" value="C:small ribosomal subunit"/>
    <property type="evidence" value="ECO:0007669"/>
    <property type="project" value="TreeGrafter"/>
</dbReference>
<dbReference type="GO" id="GO:0019843">
    <property type="term" value="F:rRNA binding"/>
    <property type="evidence" value="ECO:0007669"/>
    <property type="project" value="UniProtKB-UniRule"/>
</dbReference>
<dbReference type="GO" id="GO:0003735">
    <property type="term" value="F:structural constituent of ribosome"/>
    <property type="evidence" value="ECO:0007669"/>
    <property type="project" value="InterPro"/>
</dbReference>
<dbReference type="GO" id="GO:0006412">
    <property type="term" value="P:translation"/>
    <property type="evidence" value="ECO:0007669"/>
    <property type="project" value="UniProtKB-UniRule"/>
</dbReference>
<dbReference type="FunFam" id="1.10.287.1480:FF:000001">
    <property type="entry name" value="30S ribosomal protein S14"/>
    <property type="match status" value="1"/>
</dbReference>
<dbReference type="Gene3D" id="1.10.287.1480">
    <property type="match status" value="1"/>
</dbReference>
<dbReference type="HAMAP" id="MF_00537">
    <property type="entry name" value="Ribosomal_uS14_1"/>
    <property type="match status" value="1"/>
</dbReference>
<dbReference type="InterPro" id="IPR001209">
    <property type="entry name" value="Ribosomal_uS14"/>
</dbReference>
<dbReference type="InterPro" id="IPR023036">
    <property type="entry name" value="Ribosomal_uS14_bac/plastid"/>
</dbReference>
<dbReference type="InterPro" id="IPR018271">
    <property type="entry name" value="Ribosomal_uS14_CS"/>
</dbReference>
<dbReference type="NCBIfam" id="NF006477">
    <property type="entry name" value="PRK08881.1"/>
    <property type="match status" value="1"/>
</dbReference>
<dbReference type="PANTHER" id="PTHR19836">
    <property type="entry name" value="30S RIBOSOMAL PROTEIN S14"/>
    <property type="match status" value="1"/>
</dbReference>
<dbReference type="PANTHER" id="PTHR19836:SF19">
    <property type="entry name" value="SMALL RIBOSOMAL SUBUNIT PROTEIN US14M"/>
    <property type="match status" value="1"/>
</dbReference>
<dbReference type="Pfam" id="PF00253">
    <property type="entry name" value="Ribosomal_S14"/>
    <property type="match status" value="1"/>
</dbReference>
<dbReference type="SUPFAM" id="SSF57716">
    <property type="entry name" value="Glucocorticoid receptor-like (DNA-binding domain)"/>
    <property type="match status" value="1"/>
</dbReference>
<dbReference type="PROSITE" id="PS00527">
    <property type="entry name" value="RIBOSOMAL_S14"/>
    <property type="match status" value="1"/>
</dbReference>
<evidence type="ECO:0000255" key="1">
    <source>
        <dbReference type="HAMAP-Rule" id="MF_00537"/>
    </source>
</evidence>
<evidence type="ECO:0000305" key="2"/>
<organism>
    <name type="scientific">Brucella melitensis biotype 1 (strain ATCC 23456 / CCUG 17765 / NCTC 10094 / 16M)</name>
    <dbReference type="NCBI Taxonomy" id="224914"/>
    <lineage>
        <taxon>Bacteria</taxon>
        <taxon>Pseudomonadati</taxon>
        <taxon>Pseudomonadota</taxon>
        <taxon>Alphaproteobacteria</taxon>
        <taxon>Hyphomicrobiales</taxon>
        <taxon>Brucellaceae</taxon>
        <taxon>Brucella/Ochrobactrum group</taxon>
        <taxon>Brucella</taxon>
    </lineage>
</organism>